<reference key="1">
    <citation type="journal article" date="1992" name="J. Bacteriol.">
        <title>Characterization of the Streptomyces clavuligerus argC gene encoding N-acetylglutamyl-phosphate reductase: expression in Streptomyces lividans and effect on clavulanic acid production.</title>
        <authorList>
            <person name="Ludovice M."/>
            <person name="Martin J.F."/>
            <person name="Carrachas P."/>
            <person name="Liras P."/>
        </authorList>
    </citation>
    <scope>NUCLEOTIDE SEQUENCE [GENOMIC DNA]</scope>
    <source>
        <strain>ATCC 27064 / DSM 738 / JCM 4710 / NBRC 13307 / NCIMB 12785 / NRRL 3585 / VKM Ac-602</strain>
    </source>
</reference>
<reference key="2">
    <citation type="journal article" date="2000" name="J. Mol. Microbiol. Biotechnol.">
        <title>Characterization and expression of the arginine biosynthesis gene cluster of Streptomyces clavuligerus.</title>
        <authorList>
            <person name="Rodriguez-Garcia A."/>
            <person name="de la Fuente A."/>
            <person name="Perez-Redondo R."/>
            <person name="Martin J.F."/>
            <person name="Liras P."/>
        </authorList>
    </citation>
    <scope>SEQUENCE REVISION</scope>
    <source>
        <strain>ATCC 27064 / DSM 738 / JCM 4710 / NBRC 13307 / NCIMB 12785 / NRRL 3585 / VKM Ac-602</strain>
    </source>
</reference>
<accession>P54896</accession>
<accession>Q9LCS8</accession>
<sequence length="341" mass="34939">MTVRVAVAGASGYAGGEVVRLLLGHPAESWVALTAFSQAGQAVGHPHLGPVAGRVFEPISAQAPLAGHDVVFLALPPAQSAALAEEAGARVVDRNMGADFRLRDAGVWERFYGSPWRGCWPYGLPESPGAREALAGARRIAVPGCYPTAVTLALFPAVGAGLVDREVVTAVSGTSGAGRALKPHLLGAEVMGSVSPYAVGGTHRHTPEIAQNSTAVTDGEPVSVSFTPLLAPMPRGILATCSARLTPGTDARQVRAVYEKTYADEPFVSLLPEGVWPSTGAVLGSNQVQVQVAVDPAADRLVVVSAIDNLTKGTAGGALQSMNLALGLPETTGLPRTGLAP</sequence>
<comment type="function">
    <text evidence="1">Catalyzes the NADPH-dependent reduction of N-acetyl-5-glutamyl phosphate to yield N-acetyl-L-glutamate 5-semialdehyde.</text>
</comment>
<comment type="catalytic activity">
    <reaction evidence="1">
        <text>N-acetyl-L-glutamate 5-semialdehyde + phosphate + NADP(+) = N-acetyl-L-glutamyl 5-phosphate + NADPH + H(+)</text>
        <dbReference type="Rhea" id="RHEA:21588"/>
        <dbReference type="ChEBI" id="CHEBI:15378"/>
        <dbReference type="ChEBI" id="CHEBI:29123"/>
        <dbReference type="ChEBI" id="CHEBI:43474"/>
        <dbReference type="ChEBI" id="CHEBI:57783"/>
        <dbReference type="ChEBI" id="CHEBI:57936"/>
        <dbReference type="ChEBI" id="CHEBI:58349"/>
        <dbReference type="EC" id="1.2.1.38"/>
    </reaction>
</comment>
<comment type="pathway">
    <text evidence="1">Amino-acid biosynthesis; L-arginine biosynthesis; N(2)-acetyl-L-ornithine from L-glutamate: step 3/4.</text>
</comment>
<comment type="subcellular location">
    <subcellularLocation>
        <location evidence="1">Cytoplasm</location>
    </subcellularLocation>
</comment>
<comment type="similarity">
    <text evidence="1">Belongs to the NAGSA dehydrogenase family. Type 1 subfamily.</text>
</comment>
<evidence type="ECO:0000255" key="1">
    <source>
        <dbReference type="HAMAP-Rule" id="MF_00150"/>
    </source>
</evidence>
<organism>
    <name type="scientific">Streptomyces clavuligerus</name>
    <dbReference type="NCBI Taxonomy" id="1901"/>
    <lineage>
        <taxon>Bacteria</taxon>
        <taxon>Bacillati</taxon>
        <taxon>Actinomycetota</taxon>
        <taxon>Actinomycetes</taxon>
        <taxon>Kitasatosporales</taxon>
        <taxon>Streptomycetaceae</taxon>
        <taxon>Streptomyces</taxon>
    </lineage>
</organism>
<gene>
    <name evidence="1" type="primary">argC</name>
</gene>
<protein>
    <recommendedName>
        <fullName evidence="1">N-acetyl-gamma-glutamyl-phosphate reductase</fullName>
        <shortName evidence="1">AGPR</shortName>
        <ecNumber evidence="1">1.2.1.38</ecNumber>
    </recommendedName>
    <alternativeName>
        <fullName evidence="1">N-acetyl-glutamate semialdehyde dehydrogenase</fullName>
        <shortName evidence="1">NAGSA dehydrogenase</shortName>
    </alternativeName>
</protein>
<name>ARGC_STRCL</name>
<feature type="chain" id="PRO_0000112457" description="N-acetyl-gamma-glutamyl-phosphate reductase">
    <location>
        <begin position="1"/>
        <end position="341"/>
    </location>
</feature>
<feature type="active site" evidence="1">
    <location>
        <position position="145"/>
    </location>
</feature>
<keyword id="KW-0028">Amino-acid biosynthesis</keyword>
<keyword id="KW-0055">Arginine biosynthesis</keyword>
<keyword id="KW-0963">Cytoplasm</keyword>
<keyword id="KW-0521">NADP</keyword>
<keyword id="KW-0560">Oxidoreductase</keyword>
<proteinExistence type="inferred from homology"/>
<dbReference type="EC" id="1.2.1.38" evidence="1"/>
<dbReference type="EMBL" id="Z49111">
    <property type="protein sequence ID" value="CAB82479.1"/>
    <property type="molecule type" value="Genomic_DNA"/>
</dbReference>
<dbReference type="SMR" id="P54896"/>
<dbReference type="STRING" id="1901.BB341_23940"/>
<dbReference type="eggNOG" id="COG0002">
    <property type="taxonomic scope" value="Bacteria"/>
</dbReference>
<dbReference type="UniPathway" id="UPA00068">
    <property type="reaction ID" value="UER00108"/>
</dbReference>
<dbReference type="GO" id="GO:0005737">
    <property type="term" value="C:cytoplasm"/>
    <property type="evidence" value="ECO:0007669"/>
    <property type="project" value="UniProtKB-SubCell"/>
</dbReference>
<dbReference type="GO" id="GO:0003942">
    <property type="term" value="F:N-acetyl-gamma-glutamyl-phosphate reductase activity"/>
    <property type="evidence" value="ECO:0007669"/>
    <property type="project" value="UniProtKB-UniRule"/>
</dbReference>
<dbReference type="GO" id="GO:0051287">
    <property type="term" value="F:NAD binding"/>
    <property type="evidence" value="ECO:0007669"/>
    <property type="project" value="InterPro"/>
</dbReference>
<dbReference type="GO" id="GO:0070401">
    <property type="term" value="F:NADP+ binding"/>
    <property type="evidence" value="ECO:0007669"/>
    <property type="project" value="InterPro"/>
</dbReference>
<dbReference type="GO" id="GO:0006526">
    <property type="term" value="P:L-arginine biosynthetic process"/>
    <property type="evidence" value="ECO:0007669"/>
    <property type="project" value="UniProtKB-UniRule"/>
</dbReference>
<dbReference type="CDD" id="cd24148">
    <property type="entry name" value="AGPR_1_actinobacAGPR_like"/>
    <property type="match status" value="1"/>
</dbReference>
<dbReference type="CDD" id="cd23934">
    <property type="entry name" value="AGPR_1_C"/>
    <property type="match status" value="1"/>
</dbReference>
<dbReference type="FunFam" id="3.30.360.10:FF:000014">
    <property type="entry name" value="N-acetyl-gamma-glutamyl-phosphate reductase"/>
    <property type="match status" value="1"/>
</dbReference>
<dbReference type="Gene3D" id="3.30.360.10">
    <property type="entry name" value="Dihydrodipicolinate Reductase, domain 2"/>
    <property type="match status" value="1"/>
</dbReference>
<dbReference type="Gene3D" id="3.40.50.720">
    <property type="entry name" value="NAD(P)-binding Rossmann-like Domain"/>
    <property type="match status" value="1"/>
</dbReference>
<dbReference type="HAMAP" id="MF_00150">
    <property type="entry name" value="ArgC_type1"/>
    <property type="match status" value="1"/>
</dbReference>
<dbReference type="InterPro" id="IPR023013">
    <property type="entry name" value="AGPR_AS"/>
</dbReference>
<dbReference type="InterPro" id="IPR000706">
    <property type="entry name" value="AGPR_type-1"/>
</dbReference>
<dbReference type="InterPro" id="IPR036291">
    <property type="entry name" value="NAD(P)-bd_dom_sf"/>
</dbReference>
<dbReference type="InterPro" id="IPR050085">
    <property type="entry name" value="NAGSA_dehydrogenase"/>
</dbReference>
<dbReference type="InterPro" id="IPR000534">
    <property type="entry name" value="Semialdehyde_DH_NAD-bd"/>
</dbReference>
<dbReference type="NCBIfam" id="TIGR01850">
    <property type="entry name" value="argC"/>
    <property type="match status" value="1"/>
</dbReference>
<dbReference type="PANTHER" id="PTHR32338:SF10">
    <property type="entry name" value="N-ACETYL-GAMMA-GLUTAMYL-PHOSPHATE REDUCTASE, CHLOROPLASTIC-RELATED"/>
    <property type="match status" value="1"/>
</dbReference>
<dbReference type="PANTHER" id="PTHR32338">
    <property type="entry name" value="N-ACETYL-GAMMA-GLUTAMYL-PHOSPHATE REDUCTASE, CHLOROPLASTIC-RELATED-RELATED"/>
    <property type="match status" value="1"/>
</dbReference>
<dbReference type="Pfam" id="PF01118">
    <property type="entry name" value="Semialdhyde_dh"/>
    <property type="match status" value="1"/>
</dbReference>
<dbReference type="Pfam" id="PF22698">
    <property type="entry name" value="Semialdhyde_dhC_1"/>
    <property type="match status" value="1"/>
</dbReference>
<dbReference type="SMART" id="SM00859">
    <property type="entry name" value="Semialdhyde_dh"/>
    <property type="match status" value="1"/>
</dbReference>
<dbReference type="SUPFAM" id="SSF55347">
    <property type="entry name" value="Glyceraldehyde-3-phosphate dehydrogenase-like, C-terminal domain"/>
    <property type="match status" value="1"/>
</dbReference>
<dbReference type="SUPFAM" id="SSF51735">
    <property type="entry name" value="NAD(P)-binding Rossmann-fold domains"/>
    <property type="match status" value="1"/>
</dbReference>
<dbReference type="PROSITE" id="PS01224">
    <property type="entry name" value="ARGC"/>
    <property type="match status" value="1"/>
</dbReference>